<organism>
    <name type="scientific">Bos taurus</name>
    <name type="common">Bovine</name>
    <dbReference type="NCBI Taxonomy" id="9913"/>
    <lineage>
        <taxon>Eukaryota</taxon>
        <taxon>Metazoa</taxon>
        <taxon>Chordata</taxon>
        <taxon>Craniata</taxon>
        <taxon>Vertebrata</taxon>
        <taxon>Euteleostomi</taxon>
        <taxon>Mammalia</taxon>
        <taxon>Eutheria</taxon>
        <taxon>Laurasiatheria</taxon>
        <taxon>Artiodactyla</taxon>
        <taxon>Ruminantia</taxon>
        <taxon>Pecora</taxon>
        <taxon>Bovidae</taxon>
        <taxon>Bovinae</taxon>
        <taxon>Bos</taxon>
    </lineage>
</organism>
<keyword id="KW-0458">Lysosome</keyword>
<keyword id="KW-0472">Membrane</keyword>
<keyword id="KW-1185">Reference proteome</keyword>
<keyword id="KW-0677">Repeat</keyword>
<accession>A7E2Y6</accession>
<accession>Q7YR93</accession>
<sequence length="1652" mass="182135">MSETYAKRLSAILLDAVTDKDPQMQEQVCGALCDFGESKPAEVLSACEEHLRLHEKLAHPYRTIILRAMEIVVSNHISELDKDTARAIILLASNEMTKVKELVSDWQQAASSVLVAVGRRFISSVMEELLSKFQPGLLPHPCTVHTLASLSVSNVFGVVPFLTSILSTMLPMLGAAKHDSMKVVFCCALQRFSESILEYLANLDQAPDPTVRKDAFASDIFGAYDILFHQWLQSGGAKLRLAVVEALGPMSHLLPSEKLEEQLPKLLPRVLAFYKKHTETVHVSKSLGQILEAAVSVGSRTLDIHLNSLLAALHAQICVPVESSSPLVMSNQKEVLRCFTVLACCSPDRLLAFLLPKLDTSNERTRVGTLQVLRHVINAAAAQMEVKKPVILSSMKLPLLDTNNKVKRAVVQVVSAMAHHGYLEQPGGKAMVEYIVQQCALPPEAEIQKLGADSEALAADSVRAISVSTLYLVSTTVDRMGEVLWPYLLEFLVPIRFTRALSPLCRSLVHLAQKRQEAGAHAPLIQYNGNVHLPSPYAITTRLLAVSSHPYVGDGRGAASLRLLNVLHQDIHPALGQRWVTAIPLLLEHLDEYSEETLSQKEWEEKLLVFLRDSLAVVSDNTWVCHLTLEMCKQLPNYNGTPLEKNFLYKCVGTTLGAASSKVVRKHLRELLETARYQEEREHEGLACCFGICAISHLDDTLAQLDDFVKSDVLRKSAGIFNLFKNRSESEANKVRSALILCYGHVAAGAPRELLLARVEADLFWNMSECFSTKVLGIKVETQDPALRLSLVQSVCMATQAICSSAHSSSFHLSRKAELVAQMVEFIRAEPPDSLKTPIWKKAMLACTYLVTLEPALEEQVQADLIHSCLHRVMAVLPEPEEGDSPQEVSAAPTVGGDPQESLYLDTVQVLKDLLTSLLLWNMTPLGLQVMLEHLSPWIKSPRGHERVRAVGLSACLLQFFLQHLQISALVPFHNLGLLIGLFSPRCADLWPATRREAVSCIHSLLYLQLTCVGFSRDYQDDVAEQLLSLKDGLVHPDPAILFHTCHSIAQLIAKRLPPDHLINLLLTLFESLGDPDKNCSRAASVMINCLLKERGNMLQEKVPEIVSVLRSKLQETQEEHILQAAQHSVFALATHHCASVVSNLLGSPLPFDSHTCTLWRALALEPGLAAQVLGLLLEKISKDVLFEESQAFLLSSTPDRVATLLPLAATCALHEVASAPASGPAVLELYPQLFVALLLRVSCTVGVQPPRQLQAKERRSASSGLASRSLEPCSSAVDALQAVLVRGGNEDVVQCMELDGGWQLLRTSAGHEEGVTRLASAMAKFAGPRLPLVMKLLFTTQSSMYEVQRVTSTAFLAELLSSNVVNDLMLLESLLYNLMARQKDTSARVRRLVLHGLANITLGSPDKVQTHSPQLLTAMIGGLDDGDDPHSLVALEAMVGLARLMDLVDAWDLHAVLLHIAVRIRPFFDSERMELRSVSIGLFGHLNKACRGDCKDVFLEQVVGGLVPLLLHLRDPHAPVVTACRFALRMCGPNLECEELAAVFQRHLQEGHDLHFGEFLNTTCKHLMRHFPDLLGRLLSTSLFYYKSSWEDVRAAAPMLTGFLVLHMEAEQRPQVDLEQLLTALQLLLKDPALKVRLKAVKTLGRLVKFA</sequence>
<protein>
    <recommendedName>
        <fullName>Maestro heat-like repeat-containing protein family member 1</fullName>
    </recommendedName>
    <alternativeName>
        <fullName>HEAT repeat-containing protein 7A</fullName>
    </alternativeName>
</protein>
<proteinExistence type="evidence at transcript level"/>
<feature type="chain" id="PRO_0000329401" description="Maestro heat-like repeat-containing protein family member 1">
    <location>
        <begin position="1"/>
        <end position="1652"/>
    </location>
</feature>
<feature type="repeat" description="HEAT 1">
    <location>
        <begin position="3"/>
        <end position="41"/>
    </location>
</feature>
<feature type="repeat" description="HEAT 2">
    <location>
        <begin position="260"/>
        <end position="300"/>
    </location>
</feature>
<feature type="repeat" description="HEAT 3">
    <location>
        <begin position="344"/>
        <end position="382"/>
    </location>
</feature>
<feature type="repeat" description="HEAT 4">
    <location>
        <begin position="385"/>
        <end position="423"/>
    </location>
</feature>
<feature type="repeat" description="HEAT 5">
    <location>
        <begin position="1369"/>
        <end position="1407"/>
    </location>
</feature>
<feature type="repeat" description="HEAT 6">
    <location>
        <begin position="1410"/>
        <end position="1448"/>
    </location>
</feature>
<feature type="repeat" description="HEAT 7">
    <location>
        <begin position="1616"/>
        <end position="1652"/>
    </location>
</feature>
<feature type="sequence conflict" description="In Ref. 2; CAD58802." evidence="2" ref="2">
    <original>H</original>
    <variation>Q</variation>
    <location>
        <position position="1061"/>
    </location>
</feature>
<name>MROH1_BOVIN</name>
<dbReference type="EMBL" id="BC151617">
    <property type="protein sequence ID" value="AAI51618.1"/>
    <property type="molecule type" value="mRNA"/>
</dbReference>
<dbReference type="EMBL" id="AJ518965">
    <property type="protein sequence ID" value="CAD58802.1"/>
    <property type="molecule type" value="Genomic_DNA"/>
</dbReference>
<dbReference type="RefSeq" id="NP_001095488.1">
    <property type="nucleotide sequence ID" value="NM_001102018.1"/>
</dbReference>
<dbReference type="FunCoup" id="A7E2Y6">
    <property type="interactions" value="1953"/>
</dbReference>
<dbReference type="STRING" id="9913.ENSBTAP00000037251"/>
<dbReference type="PaxDb" id="9913-ENSBTAP00000037251"/>
<dbReference type="GeneID" id="515055"/>
<dbReference type="KEGG" id="bta:515055"/>
<dbReference type="CTD" id="727957"/>
<dbReference type="eggNOG" id="KOG2032">
    <property type="taxonomic scope" value="Eukaryota"/>
</dbReference>
<dbReference type="InParanoid" id="A7E2Y6"/>
<dbReference type="OrthoDB" id="1884734at2759"/>
<dbReference type="Proteomes" id="UP000009136">
    <property type="component" value="Unplaced"/>
</dbReference>
<dbReference type="GO" id="GO:0005737">
    <property type="term" value="C:cytoplasm"/>
    <property type="evidence" value="ECO:0000318"/>
    <property type="project" value="GO_Central"/>
</dbReference>
<dbReference type="GO" id="GO:0005765">
    <property type="term" value="C:lysosomal membrane"/>
    <property type="evidence" value="ECO:0000250"/>
    <property type="project" value="UniProtKB"/>
</dbReference>
<dbReference type="GO" id="GO:0140912">
    <property type="term" value="F:membrane destabilizing activity"/>
    <property type="evidence" value="ECO:0000250"/>
    <property type="project" value="UniProtKB"/>
</dbReference>
<dbReference type="GO" id="GO:0170064">
    <property type="term" value="P:lysosome fission"/>
    <property type="evidence" value="ECO:0000250"/>
    <property type="project" value="UniProtKB"/>
</dbReference>
<dbReference type="Gene3D" id="1.25.10.10">
    <property type="entry name" value="Leucine-rich Repeat Variant"/>
    <property type="match status" value="2"/>
</dbReference>
<dbReference type="InterPro" id="IPR011989">
    <property type="entry name" value="ARM-like"/>
</dbReference>
<dbReference type="InterPro" id="IPR016024">
    <property type="entry name" value="ARM-type_fold"/>
</dbReference>
<dbReference type="InterPro" id="IPR055406">
    <property type="entry name" value="HEAT_Maestro"/>
</dbReference>
<dbReference type="InterPro" id="IPR055408">
    <property type="entry name" value="HEAT_MROH2B-like"/>
</dbReference>
<dbReference type="InterPro" id="IPR021133">
    <property type="entry name" value="HEAT_type_2"/>
</dbReference>
<dbReference type="InterPro" id="IPR048465">
    <property type="entry name" value="Maestro-like_HEAT"/>
</dbReference>
<dbReference type="InterPro" id="IPR045206">
    <property type="entry name" value="Maestro_heat-like_prot"/>
</dbReference>
<dbReference type="InterPro" id="IPR056282">
    <property type="entry name" value="MROH2B-like_N_HEAT"/>
</dbReference>
<dbReference type="PANTHER" id="PTHR23120:SF44">
    <property type="entry name" value="MAESTRO HEAT-LIKE REPEAT-CONTAINING PROTEIN FAMILY MEMBER 1"/>
    <property type="match status" value="1"/>
</dbReference>
<dbReference type="PANTHER" id="PTHR23120">
    <property type="entry name" value="MAESTRO-RELATED HEAT DOMAIN-CONTAINING"/>
    <property type="match status" value="1"/>
</dbReference>
<dbReference type="Pfam" id="PF21047">
    <property type="entry name" value="HEAT_Maestro"/>
    <property type="match status" value="1"/>
</dbReference>
<dbReference type="Pfam" id="PF23210">
    <property type="entry name" value="HEAT_Maestro_2"/>
    <property type="match status" value="1"/>
</dbReference>
<dbReference type="Pfam" id="PF23221">
    <property type="entry name" value="HEAT_MROH2B_1st"/>
    <property type="match status" value="1"/>
</dbReference>
<dbReference type="Pfam" id="PF23227">
    <property type="entry name" value="HEAT_MROH2B_C"/>
    <property type="match status" value="1"/>
</dbReference>
<dbReference type="SUPFAM" id="SSF48371">
    <property type="entry name" value="ARM repeat"/>
    <property type="match status" value="2"/>
</dbReference>
<dbReference type="PROSITE" id="PS50077">
    <property type="entry name" value="HEAT_REPEAT"/>
    <property type="match status" value="1"/>
</dbReference>
<comment type="function">
    <text evidence="1">Lysosome fission factor. Recruited to lysosomes by RAB7 (RAB7A or RAB7B) at scission sites and homooligomerizes to mediate the constriction and scission of lysosomal tubules. May sever membranes by inserting amphipathic helices into one bilayer leaflet. Lysosome fission is required to maintain their steady-state number, shape, size, composition and function, and to accomplish regeneration.</text>
</comment>
<comment type="subunit">
    <text evidence="1">Homooligomer; homooligomerizes at lysosome scission sites.</text>
</comment>
<comment type="subcellular location">
    <subcellularLocation>
        <location evidence="1">Lysosome membrane</location>
    </subcellularLocation>
    <text evidence="1">Recruited to the lysosome membrane by RAB7 (RAB7A or RAB7B).</text>
</comment>
<comment type="similarity">
    <text evidence="2">Belongs to the MROH1 family.</text>
</comment>
<reference key="1">
    <citation type="submission" date="2007-08" db="EMBL/GenBank/DDBJ databases">
        <authorList>
            <consortium name="NIH - Mammalian Gene Collection (MGC) project"/>
        </authorList>
    </citation>
    <scope>NUCLEOTIDE SEQUENCE [LARGE SCALE MRNA]</scope>
    <source>
        <strain>Hereford</strain>
        <tissue>Hypothalamus</tissue>
    </source>
</reference>
<reference key="2">
    <citation type="journal article" date="2004" name="Genomics">
        <title>Assessment of the gene content of the chromosomal regions flanking bovine DGAT1.</title>
        <authorList>
            <person name="Winter A."/>
            <person name="Alzinger A."/>
            <person name="Fries R."/>
        </authorList>
    </citation>
    <scope>NUCLEOTIDE SEQUENCE [GENOMIC DNA] OF 934-1102</scope>
</reference>
<gene>
    <name type="primary">MROH1</name>
    <name type="synonym">HEATR7A</name>
</gene>
<evidence type="ECO:0000250" key="1">
    <source>
        <dbReference type="UniProtKB" id="Q8NDA8"/>
    </source>
</evidence>
<evidence type="ECO:0000305" key="2"/>